<comment type="function">
    <text evidence="1">One of the components of the core complex of photosystem II (PSII). PSII is a light-driven water:plastoquinone oxidoreductase that uses light energy to abstract electrons from H(2)O, generating O(2) and a proton gradient subsequently used for ATP formation. It consists of a core antenna complex that captures photons, and an electron transfer chain that converts photonic excitation into a charge separation.</text>
</comment>
<comment type="subunit">
    <text evidence="1">PSII is composed of 1 copy each of membrane proteins PsbA, PsbB, PsbC, PsbD, PsbE, PsbF, PsbH, PsbI, PsbJ, PsbK, PsbL, PsbM, PsbT, PsbX, PsbY, PsbZ, Psb30/Ycf12, at least 3 peripheral proteins of the oxygen-evolving complex and a large number of cofactors. It forms dimeric complexes.</text>
</comment>
<comment type="subcellular location">
    <subcellularLocation>
        <location evidence="1">Plastid</location>
        <location evidence="1">Chloroplast thylakoid membrane</location>
        <topology evidence="1">Single-pass membrane protein</topology>
    </subcellularLocation>
</comment>
<comment type="similarity">
    <text evidence="1">Belongs to the PsbJ family.</text>
</comment>
<protein>
    <recommendedName>
        <fullName evidence="1">Photosystem II reaction center protein J</fullName>
        <shortName evidence="1">PSII-J</shortName>
    </recommendedName>
</protein>
<accession>A4QK32</accession>
<keyword id="KW-0150">Chloroplast</keyword>
<keyword id="KW-0472">Membrane</keyword>
<keyword id="KW-0602">Photosynthesis</keyword>
<keyword id="KW-0604">Photosystem II</keyword>
<keyword id="KW-0934">Plastid</keyword>
<keyword id="KW-0674">Reaction center</keyword>
<keyword id="KW-0793">Thylakoid</keyword>
<keyword id="KW-0812">Transmembrane</keyword>
<keyword id="KW-1133">Transmembrane helix</keyword>
<gene>
    <name evidence="1" type="primary">psbJ</name>
</gene>
<evidence type="ECO:0000255" key="1">
    <source>
        <dbReference type="HAMAP-Rule" id="MF_01305"/>
    </source>
</evidence>
<proteinExistence type="inferred from homology"/>
<organism>
    <name type="scientific">Arabis hirsuta</name>
    <name type="common">Hairy rock-cress</name>
    <name type="synonym">Turritis hirsuta</name>
    <dbReference type="NCBI Taxonomy" id="78191"/>
    <lineage>
        <taxon>Eukaryota</taxon>
        <taxon>Viridiplantae</taxon>
        <taxon>Streptophyta</taxon>
        <taxon>Embryophyta</taxon>
        <taxon>Tracheophyta</taxon>
        <taxon>Spermatophyta</taxon>
        <taxon>Magnoliopsida</taxon>
        <taxon>eudicotyledons</taxon>
        <taxon>Gunneridae</taxon>
        <taxon>Pentapetalae</taxon>
        <taxon>rosids</taxon>
        <taxon>malvids</taxon>
        <taxon>Brassicales</taxon>
        <taxon>Brassicaceae</taxon>
        <taxon>Arabideae</taxon>
        <taxon>Arabis</taxon>
    </lineage>
</organism>
<geneLocation type="chloroplast"/>
<name>PSBJ_ARAHI</name>
<reference key="1">
    <citation type="submission" date="2007-03" db="EMBL/GenBank/DDBJ databases">
        <title>Sequencing analysis of Arabis hirsuta chloroplast DNA.</title>
        <authorList>
            <person name="Hosouchi T."/>
            <person name="Tsuruoka H."/>
            <person name="Kotani H."/>
        </authorList>
    </citation>
    <scope>NUCLEOTIDE SEQUENCE [LARGE SCALE GENOMIC DNA]</scope>
</reference>
<sequence>MADTTGRIPLWVIGTVAGIPVIGLIGIFFYGSYSGLGSSL</sequence>
<dbReference type="EMBL" id="AP009369">
    <property type="protein sequence ID" value="BAF50037.1"/>
    <property type="molecule type" value="Genomic_DNA"/>
</dbReference>
<dbReference type="RefSeq" id="YP_001123213.1">
    <property type="nucleotide sequence ID" value="NC_009268.1"/>
</dbReference>
<dbReference type="SMR" id="A4QK32"/>
<dbReference type="GeneID" id="4962530"/>
<dbReference type="GO" id="GO:0009535">
    <property type="term" value="C:chloroplast thylakoid membrane"/>
    <property type="evidence" value="ECO:0007669"/>
    <property type="project" value="UniProtKB-SubCell"/>
</dbReference>
<dbReference type="GO" id="GO:0009539">
    <property type="term" value="C:photosystem II reaction center"/>
    <property type="evidence" value="ECO:0007669"/>
    <property type="project" value="InterPro"/>
</dbReference>
<dbReference type="GO" id="GO:0015979">
    <property type="term" value="P:photosynthesis"/>
    <property type="evidence" value="ECO:0007669"/>
    <property type="project" value="UniProtKB-UniRule"/>
</dbReference>
<dbReference type="Gene3D" id="6.10.250.2070">
    <property type="match status" value="1"/>
</dbReference>
<dbReference type="HAMAP" id="MF_01305">
    <property type="entry name" value="PSII_PsbJ"/>
    <property type="match status" value="1"/>
</dbReference>
<dbReference type="InterPro" id="IPR002682">
    <property type="entry name" value="PSII_PsbJ"/>
</dbReference>
<dbReference type="InterPro" id="IPR037267">
    <property type="entry name" value="PSII_PsbJ_sf"/>
</dbReference>
<dbReference type="NCBIfam" id="NF002722">
    <property type="entry name" value="PRK02565.1"/>
    <property type="match status" value="1"/>
</dbReference>
<dbReference type="PANTHER" id="PTHR34812">
    <property type="entry name" value="PHOTOSYSTEM II REACTION CENTER PROTEIN J"/>
    <property type="match status" value="1"/>
</dbReference>
<dbReference type="PANTHER" id="PTHR34812:SF3">
    <property type="entry name" value="PHOTOSYSTEM II REACTION CENTER PROTEIN J"/>
    <property type="match status" value="1"/>
</dbReference>
<dbReference type="Pfam" id="PF01788">
    <property type="entry name" value="PsbJ"/>
    <property type="match status" value="1"/>
</dbReference>
<dbReference type="SUPFAM" id="SSF161021">
    <property type="entry name" value="Photosystem II reaction center protein J, PsbJ"/>
    <property type="match status" value="1"/>
</dbReference>
<feature type="chain" id="PRO_0000292247" description="Photosystem II reaction center protein J">
    <location>
        <begin position="1"/>
        <end position="40"/>
    </location>
</feature>
<feature type="transmembrane region" description="Helical" evidence="1">
    <location>
        <begin position="8"/>
        <end position="28"/>
    </location>
</feature>